<accession>Q89X98</accession>
<name>LEUC1_BRADU</name>
<reference key="1">
    <citation type="journal article" date="2002" name="DNA Res.">
        <title>Complete genomic sequence of nitrogen-fixing symbiotic bacterium Bradyrhizobium japonicum USDA110.</title>
        <authorList>
            <person name="Kaneko T."/>
            <person name="Nakamura Y."/>
            <person name="Sato S."/>
            <person name="Minamisawa K."/>
            <person name="Uchiumi T."/>
            <person name="Sasamoto S."/>
            <person name="Watanabe A."/>
            <person name="Idesawa K."/>
            <person name="Iriguchi M."/>
            <person name="Kawashima K."/>
            <person name="Kohara M."/>
            <person name="Matsumoto M."/>
            <person name="Shimpo S."/>
            <person name="Tsuruoka H."/>
            <person name="Wada T."/>
            <person name="Yamada M."/>
            <person name="Tabata S."/>
        </authorList>
    </citation>
    <scope>NUCLEOTIDE SEQUENCE [LARGE SCALE GENOMIC DNA]</scope>
    <source>
        <strain>JCM 10833 / BCRC 13528 / IAM 13628 / NBRC 14792 / USDA 110</strain>
    </source>
</reference>
<comment type="function">
    <text evidence="1">Catalyzes the isomerization between 2-isopropylmalate and 3-isopropylmalate, via the formation of 2-isopropylmaleate.</text>
</comment>
<comment type="catalytic activity">
    <reaction evidence="1">
        <text>(2R,3S)-3-isopropylmalate = (2S)-2-isopropylmalate</text>
        <dbReference type="Rhea" id="RHEA:32287"/>
        <dbReference type="ChEBI" id="CHEBI:1178"/>
        <dbReference type="ChEBI" id="CHEBI:35121"/>
        <dbReference type="EC" id="4.2.1.33"/>
    </reaction>
</comment>
<comment type="cofactor">
    <cofactor evidence="1">
        <name>[4Fe-4S] cluster</name>
        <dbReference type="ChEBI" id="CHEBI:49883"/>
    </cofactor>
    <text evidence="1">Binds 1 [4Fe-4S] cluster per subunit.</text>
</comment>
<comment type="pathway">
    <text evidence="1">Amino-acid biosynthesis; L-leucine biosynthesis; L-leucine from 3-methyl-2-oxobutanoate: step 2/4.</text>
</comment>
<comment type="subunit">
    <text evidence="1">Heterodimer of LeuC and LeuD.</text>
</comment>
<comment type="similarity">
    <text evidence="1">Belongs to the aconitase/IPM isomerase family. LeuC type 1 subfamily.</text>
</comment>
<comment type="sequence caution" evidence="2">
    <conflict type="erroneous initiation">
        <sequence resource="EMBL-CDS" id="BAC45681"/>
    </conflict>
</comment>
<protein>
    <recommendedName>
        <fullName evidence="1">3-isopropylmalate dehydratase large subunit 1</fullName>
        <ecNumber evidence="1">4.2.1.33</ecNumber>
    </recommendedName>
    <alternativeName>
        <fullName evidence="1">Alpha-IPM isomerase 1</fullName>
        <shortName evidence="1">IPMI 1</shortName>
    </alternativeName>
    <alternativeName>
        <fullName evidence="1">Isopropylmalate isomerase 1</fullName>
    </alternativeName>
</protein>
<evidence type="ECO:0000255" key="1">
    <source>
        <dbReference type="HAMAP-Rule" id="MF_01026"/>
    </source>
</evidence>
<evidence type="ECO:0000305" key="2"/>
<proteinExistence type="inferred from homology"/>
<keyword id="KW-0004">4Fe-4S</keyword>
<keyword id="KW-0028">Amino-acid biosynthesis</keyword>
<keyword id="KW-0100">Branched-chain amino acid biosynthesis</keyword>
<keyword id="KW-0408">Iron</keyword>
<keyword id="KW-0411">Iron-sulfur</keyword>
<keyword id="KW-0432">Leucine biosynthesis</keyword>
<keyword id="KW-0456">Lyase</keyword>
<keyword id="KW-0479">Metal-binding</keyword>
<keyword id="KW-1185">Reference proteome</keyword>
<organism>
    <name type="scientific">Bradyrhizobium diazoefficiens (strain JCM 10833 / BCRC 13528 / IAM 13628 / NBRC 14792 / USDA 110)</name>
    <dbReference type="NCBI Taxonomy" id="224911"/>
    <lineage>
        <taxon>Bacteria</taxon>
        <taxon>Pseudomonadati</taxon>
        <taxon>Pseudomonadota</taxon>
        <taxon>Alphaproteobacteria</taxon>
        <taxon>Hyphomicrobiales</taxon>
        <taxon>Nitrobacteraceae</taxon>
        <taxon>Bradyrhizobium</taxon>
    </lineage>
</organism>
<gene>
    <name evidence="1" type="primary">leuC1</name>
    <name type="ordered locus">bll0416</name>
</gene>
<sequence length="477" mass="50720">MPIRGGRIVDTRGRTLLAKIWDQHVIAHVSDDTDLLHVDRHLLHDLGGSRGLIDLKSRNLPVHNPELTFATPDHAISTASGRAGTITTGQELLAALRTETSASGIRLFDIDQPGQGIVHVIGPELGLSLPGCLIVCGDSHTCTHGGLGALAFGIGSSELTHVLATQTIIQRRPKTMRVTFDGRMPFGVTAKDLILALIGHVGAAGGTGYAVEYAGSAIRGMPIEGRLTICNLSVELGAKMGLIAPDQTTFDYVRGRPYAPQGEMWERAVTAWRTLRSDSDAMFDREVTIDVGTIIPQITWGTSPEHVLGVDGRVPDPRDIADPARRGAIEIALDYMGLKPGAPIAGTKVDWVFIGSCTNSRLSDLRAAAEVARGRKVAPGVRAWVVPGSETVKRDAVAEGLDKIFIDAGFEWREPGCSMCLAANGETVPPGQRSVSTSNRNFIGRQGPRARTHLASPAMAAAAAVSGAIADVRTMER</sequence>
<dbReference type="EC" id="4.2.1.33" evidence="1"/>
<dbReference type="EMBL" id="BA000040">
    <property type="protein sequence ID" value="BAC45681.1"/>
    <property type="status" value="ALT_INIT"/>
    <property type="molecule type" value="Genomic_DNA"/>
</dbReference>
<dbReference type="RefSeq" id="NP_767056.1">
    <property type="nucleotide sequence ID" value="NC_004463.1"/>
</dbReference>
<dbReference type="SMR" id="Q89X98"/>
<dbReference type="STRING" id="224911.AAV28_41325"/>
<dbReference type="EnsemblBacteria" id="BAC45681">
    <property type="protein sequence ID" value="BAC45681"/>
    <property type="gene ID" value="BAC45681"/>
</dbReference>
<dbReference type="KEGG" id="bja:bll0416"/>
<dbReference type="PATRIC" id="fig|224911.5.peg.423"/>
<dbReference type="eggNOG" id="COG0065">
    <property type="taxonomic scope" value="Bacteria"/>
</dbReference>
<dbReference type="HOGENOM" id="CLU_006714_3_4_5"/>
<dbReference type="InParanoid" id="Q89X98"/>
<dbReference type="OrthoDB" id="9802769at2"/>
<dbReference type="UniPathway" id="UPA00048">
    <property type="reaction ID" value="UER00071"/>
</dbReference>
<dbReference type="Proteomes" id="UP000002526">
    <property type="component" value="Chromosome"/>
</dbReference>
<dbReference type="GO" id="GO:0003861">
    <property type="term" value="F:3-isopropylmalate dehydratase activity"/>
    <property type="evidence" value="ECO:0007669"/>
    <property type="project" value="UniProtKB-UniRule"/>
</dbReference>
<dbReference type="GO" id="GO:0051539">
    <property type="term" value="F:4 iron, 4 sulfur cluster binding"/>
    <property type="evidence" value="ECO:0007669"/>
    <property type="project" value="UniProtKB-KW"/>
</dbReference>
<dbReference type="GO" id="GO:0046872">
    <property type="term" value="F:metal ion binding"/>
    <property type="evidence" value="ECO:0007669"/>
    <property type="project" value="UniProtKB-KW"/>
</dbReference>
<dbReference type="GO" id="GO:0009098">
    <property type="term" value="P:L-leucine biosynthetic process"/>
    <property type="evidence" value="ECO:0007669"/>
    <property type="project" value="UniProtKB-UniRule"/>
</dbReference>
<dbReference type="CDD" id="cd01583">
    <property type="entry name" value="IPMI"/>
    <property type="match status" value="1"/>
</dbReference>
<dbReference type="FunFam" id="3.30.499.10:FF:000007">
    <property type="entry name" value="3-isopropylmalate dehydratase large subunit"/>
    <property type="match status" value="1"/>
</dbReference>
<dbReference type="Gene3D" id="3.30.499.10">
    <property type="entry name" value="Aconitase, domain 3"/>
    <property type="match status" value="2"/>
</dbReference>
<dbReference type="HAMAP" id="MF_01026">
    <property type="entry name" value="LeuC_type1"/>
    <property type="match status" value="1"/>
</dbReference>
<dbReference type="InterPro" id="IPR004430">
    <property type="entry name" value="3-IsopropMal_deHydase_lsu"/>
</dbReference>
<dbReference type="InterPro" id="IPR015931">
    <property type="entry name" value="Acnase/IPM_dHydase_lsu_aba_1/3"/>
</dbReference>
<dbReference type="InterPro" id="IPR001030">
    <property type="entry name" value="Acoase/IPM_deHydtase_lsu_aba"/>
</dbReference>
<dbReference type="InterPro" id="IPR018136">
    <property type="entry name" value="Aconitase_4Fe-4S_BS"/>
</dbReference>
<dbReference type="InterPro" id="IPR036008">
    <property type="entry name" value="Aconitase_4Fe-4S_dom"/>
</dbReference>
<dbReference type="InterPro" id="IPR050067">
    <property type="entry name" value="IPM_dehydratase_rel_enz"/>
</dbReference>
<dbReference type="InterPro" id="IPR033941">
    <property type="entry name" value="IPMI_cat"/>
</dbReference>
<dbReference type="NCBIfam" id="TIGR00170">
    <property type="entry name" value="leuC"/>
    <property type="match status" value="1"/>
</dbReference>
<dbReference type="NCBIfam" id="NF004016">
    <property type="entry name" value="PRK05478.1"/>
    <property type="match status" value="1"/>
</dbReference>
<dbReference type="NCBIfam" id="NF009116">
    <property type="entry name" value="PRK12466.1"/>
    <property type="match status" value="1"/>
</dbReference>
<dbReference type="PANTHER" id="PTHR43822:SF9">
    <property type="entry name" value="3-ISOPROPYLMALATE DEHYDRATASE"/>
    <property type="match status" value="1"/>
</dbReference>
<dbReference type="PANTHER" id="PTHR43822">
    <property type="entry name" value="HOMOACONITASE, MITOCHONDRIAL-RELATED"/>
    <property type="match status" value="1"/>
</dbReference>
<dbReference type="Pfam" id="PF00330">
    <property type="entry name" value="Aconitase"/>
    <property type="match status" value="1"/>
</dbReference>
<dbReference type="PRINTS" id="PR00415">
    <property type="entry name" value="ACONITASE"/>
</dbReference>
<dbReference type="SUPFAM" id="SSF53732">
    <property type="entry name" value="Aconitase iron-sulfur domain"/>
    <property type="match status" value="1"/>
</dbReference>
<dbReference type="PROSITE" id="PS00450">
    <property type="entry name" value="ACONITASE_1"/>
    <property type="match status" value="1"/>
</dbReference>
<dbReference type="PROSITE" id="PS01244">
    <property type="entry name" value="ACONITASE_2"/>
    <property type="match status" value="1"/>
</dbReference>
<feature type="chain" id="PRO_0000076711" description="3-isopropylmalate dehydratase large subunit 1">
    <location>
        <begin position="1"/>
        <end position="477"/>
    </location>
</feature>
<feature type="binding site" evidence="1">
    <location>
        <position position="357"/>
    </location>
    <ligand>
        <name>[4Fe-4S] cluster</name>
        <dbReference type="ChEBI" id="CHEBI:49883"/>
    </ligand>
</feature>
<feature type="binding site" evidence="1">
    <location>
        <position position="417"/>
    </location>
    <ligand>
        <name>[4Fe-4S] cluster</name>
        <dbReference type="ChEBI" id="CHEBI:49883"/>
    </ligand>
</feature>
<feature type="binding site" evidence="1">
    <location>
        <position position="420"/>
    </location>
    <ligand>
        <name>[4Fe-4S] cluster</name>
        <dbReference type="ChEBI" id="CHEBI:49883"/>
    </ligand>
</feature>